<dbReference type="EC" id="1.17.1.8" evidence="1"/>
<dbReference type="EMBL" id="AE014075">
    <property type="protein sequence ID" value="AAN78535.1"/>
    <property type="molecule type" value="Genomic_DNA"/>
</dbReference>
<dbReference type="RefSeq" id="WP_000543585.1">
    <property type="nucleotide sequence ID" value="NZ_CP051263.1"/>
</dbReference>
<dbReference type="SMR" id="Q8FLB4"/>
<dbReference type="STRING" id="199310.c0037"/>
<dbReference type="KEGG" id="ecc:c0037"/>
<dbReference type="eggNOG" id="COG0289">
    <property type="taxonomic scope" value="Bacteria"/>
</dbReference>
<dbReference type="HOGENOM" id="CLU_047479_2_1_6"/>
<dbReference type="BioCyc" id="ECOL199310:C0037-MONOMER"/>
<dbReference type="UniPathway" id="UPA00034">
    <property type="reaction ID" value="UER00018"/>
</dbReference>
<dbReference type="Proteomes" id="UP000001410">
    <property type="component" value="Chromosome"/>
</dbReference>
<dbReference type="GO" id="GO:0005829">
    <property type="term" value="C:cytosol"/>
    <property type="evidence" value="ECO:0007669"/>
    <property type="project" value="TreeGrafter"/>
</dbReference>
<dbReference type="GO" id="GO:0008839">
    <property type="term" value="F:4-hydroxy-tetrahydrodipicolinate reductase"/>
    <property type="evidence" value="ECO:0007669"/>
    <property type="project" value="UniProtKB-EC"/>
</dbReference>
<dbReference type="GO" id="GO:0051287">
    <property type="term" value="F:NAD binding"/>
    <property type="evidence" value="ECO:0007669"/>
    <property type="project" value="UniProtKB-UniRule"/>
</dbReference>
<dbReference type="GO" id="GO:0050661">
    <property type="term" value="F:NADP binding"/>
    <property type="evidence" value="ECO:0007669"/>
    <property type="project" value="UniProtKB-UniRule"/>
</dbReference>
<dbReference type="GO" id="GO:0016726">
    <property type="term" value="F:oxidoreductase activity, acting on CH or CH2 groups, NAD or NADP as acceptor"/>
    <property type="evidence" value="ECO:0007669"/>
    <property type="project" value="UniProtKB-UniRule"/>
</dbReference>
<dbReference type="GO" id="GO:0019877">
    <property type="term" value="P:diaminopimelate biosynthetic process"/>
    <property type="evidence" value="ECO:0007669"/>
    <property type="project" value="UniProtKB-UniRule"/>
</dbReference>
<dbReference type="GO" id="GO:0009089">
    <property type="term" value="P:lysine biosynthetic process via diaminopimelate"/>
    <property type="evidence" value="ECO:0007669"/>
    <property type="project" value="UniProtKB-UniRule"/>
</dbReference>
<dbReference type="CDD" id="cd02274">
    <property type="entry name" value="DHDPR_N"/>
    <property type="match status" value="1"/>
</dbReference>
<dbReference type="FunFam" id="3.30.360.10:FF:000004">
    <property type="entry name" value="4-hydroxy-tetrahydrodipicolinate reductase"/>
    <property type="match status" value="1"/>
</dbReference>
<dbReference type="FunFam" id="3.40.50.720:FF:000048">
    <property type="entry name" value="4-hydroxy-tetrahydrodipicolinate reductase"/>
    <property type="match status" value="1"/>
</dbReference>
<dbReference type="Gene3D" id="3.30.360.10">
    <property type="entry name" value="Dihydrodipicolinate Reductase, domain 2"/>
    <property type="match status" value="1"/>
</dbReference>
<dbReference type="Gene3D" id="3.40.50.720">
    <property type="entry name" value="NAD(P)-binding Rossmann-like Domain"/>
    <property type="match status" value="1"/>
</dbReference>
<dbReference type="HAMAP" id="MF_00102">
    <property type="entry name" value="DapB"/>
    <property type="match status" value="1"/>
</dbReference>
<dbReference type="InterPro" id="IPR022663">
    <property type="entry name" value="DapB_C"/>
</dbReference>
<dbReference type="InterPro" id="IPR000846">
    <property type="entry name" value="DapB_N"/>
</dbReference>
<dbReference type="InterPro" id="IPR022664">
    <property type="entry name" value="DapB_N_CS"/>
</dbReference>
<dbReference type="InterPro" id="IPR023940">
    <property type="entry name" value="DHDPR_bac"/>
</dbReference>
<dbReference type="InterPro" id="IPR036291">
    <property type="entry name" value="NAD(P)-bd_dom_sf"/>
</dbReference>
<dbReference type="NCBIfam" id="TIGR00036">
    <property type="entry name" value="dapB"/>
    <property type="match status" value="1"/>
</dbReference>
<dbReference type="PANTHER" id="PTHR20836:SF0">
    <property type="entry name" value="4-HYDROXY-TETRAHYDRODIPICOLINATE REDUCTASE 1, CHLOROPLASTIC-RELATED"/>
    <property type="match status" value="1"/>
</dbReference>
<dbReference type="PANTHER" id="PTHR20836">
    <property type="entry name" value="DIHYDRODIPICOLINATE REDUCTASE"/>
    <property type="match status" value="1"/>
</dbReference>
<dbReference type="Pfam" id="PF05173">
    <property type="entry name" value="DapB_C"/>
    <property type="match status" value="1"/>
</dbReference>
<dbReference type="Pfam" id="PF01113">
    <property type="entry name" value="DapB_N"/>
    <property type="match status" value="1"/>
</dbReference>
<dbReference type="PIRSF" id="PIRSF000161">
    <property type="entry name" value="DHPR"/>
    <property type="match status" value="1"/>
</dbReference>
<dbReference type="SUPFAM" id="SSF55347">
    <property type="entry name" value="Glyceraldehyde-3-phosphate dehydrogenase-like, C-terminal domain"/>
    <property type="match status" value="1"/>
</dbReference>
<dbReference type="SUPFAM" id="SSF51735">
    <property type="entry name" value="NAD(P)-binding Rossmann-fold domains"/>
    <property type="match status" value="1"/>
</dbReference>
<dbReference type="PROSITE" id="PS01298">
    <property type="entry name" value="DAPB"/>
    <property type="match status" value="1"/>
</dbReference>
<reference key="1">
    <citation type="journal article" date="2002" name="Proc. Natl. Acad. Sci. U.S.A.">
        <title>Extensive mosaic structure revealed by the complete genome sequence of uropathogenic Escherichia coli.</title>
        <authorList>
            <person name="Welch R.A."/>
            <person name="Burland V."/>
            <person name="Plunkett G. III"/>
            <person name="Redford P."/>
            <person name="Roesch P."/>
            <person name="Rasko D."/>
            <person name="Buckles E.L."/>
            <person name="Liou S.-R."/>
            <person name="Boutin A."/>
            <person name="Hackett J."/>
            <person name="Stroud D."/>
            <person name="Mayhew G.F."/>
            <person name="Rose D.J."/>
            <person name="Zhou S."/>
            <person name="Schwartz D.C."/>
            <person name="Perna N.T."/>
            <person name="Mobley H.L.T."/>
            <person name="Donnenberg M.S."/>
            <person name="Blattner F.R."/>
        </authorList>
    </citation>
    <scope>NUCLEOTIDE SEQUENCE [LARGE SCALE GENOMIC DNA]</scope>
    <source>
        <strain>CFT073 / ATCC 700928 / UPEC</strain>
    </source>
</reference>
<feature type="chain" id="PRO_0000141439" description="4-hydroxy-tetrahydrodipicolinate reductase">
    <location>
        <begin position="1"/>
        <end position="273"/>
    </location>
</feature>
<feature type="active site" description="Proton donor/acceptor" evidence="1">
    <location>
        <position position="159"/>
    </location>
</feature>
<feature type="active site" description="Proton donor" evidence="1">
    <location>
        <position position="163"/>
    </location>
</feature>
<feature type="binding site" evidence="1">
    <location>
        <begin position="12"/>
        <end position="17"/>
    </location>
    <ligand>
        <name>NAD(+)</name>
        <dbReference type="ChEBI" id="CHEBI:57540"/>
    </ligand>
</feature>
<feature type="binding site" evidence="1">
    <location>
        <position position="38"/>
    </location>
    <ligand>
        <name>NAD(+)</name>
        <dbReference type="ChEBI" id="CHEBI:57540"/>
    </ligand>
</feature>
<feature type="binding site" evidence="1">
    <location>
        <position position="39"/>
    </location>
    <ligand>
        <name>NADP(+)</name>
        <dbReference type="ChEBI" id="CHEBI:58349"/>
    </ligand>
</feature>
<feature type="binding site" evidence="1">
    <location>
        <begin position="102"/>
        <end position="104"/>
    </location>
    <ligand>
        <name>NAD(+)</name>
        <dbReference type="ChEBI" id="CHEBI:57540"/>
    </ligand>
</feature>
<feature type="binding site" evidence="1">
    <location>
        <begin position="126"/>
        <end position="129"/>
    </location>
    <ligand>
        <name>NAD(+)</name>
        <dbReference type="ChEBI" id="CHEBI:57540"/>
    </ligand>
</feature>
<feature type="binding site" evidence="1">
    <location>
        <position position="160"/>
    </location>
    <ligand>
        <name>(S)-2,3,4,5-tetrahydrodipicolinate</name>
        <dbReference type="ChEBI" id="CHEBI:16845"/>
    </ligand>
</feature>
<feature type="binding site" evidence="1">
    <location>
        <begin position="169"/>
        <end position="170"/>
    </location>
    <ligand>
        <name>(S)-2,3,4,5-tetrahydrodipicolinate</name>
        <dbReference type="ChEBI" id="CHEBI:16845"/>
    </ligand>
</feature>
<comment type="function">
    <text evidence="1">Catalyzes the conversion of 4-hydroxy-tetrahydrodipicolinate (HTPA) to tetrahydrodipicolinate.</text>
</comment>
<comment type="catalytic activity">
    <reaction evidence="1">
        <text>(S)-2,3,4,5-tetrahydrodipicolinate + NAD(+) + H2O = (2S,4S)-4-hydroxy-2,3,4,5-tetrahydrodipicolinate + NADH + H(+)</text>
        <dbReference type="Rhea" id="RHEA:35323"/>
        <dbReference type="ChEBI" id="CHEBI:15377"/>
        <dbReference type="ChEBI" id="CHEBI:15378"/>
        <dbReference type="ChEBI" id="CHEBI:16845"/>
        <dbReference type="ChEBI" id="CHEBI:57540"/>
        <dbReference type="ChEBI" id="CHEBI:57945"/>
        <dbReference type="ChEBI" id="CHEBI:67139"/>
        <dbReference type="EC" id="1.17.1.8"/>
    </reaction>
</comment>
<comment type="catalytic activity">
    <reaction evidence="1">
        <text>(S)-2,3,4,5-tetrahydrodipicolinate + NADP(+) + H2O = (2S,4S)-4-hydroxy-2,3,4,5-tetrahydrodipicolinate + NADPH + H(+)</text>
        <dbReference type="Rhea" id="RHEA:35331"/>
        <dbReference type="ChEBI" id="CHEBI:15377"/>
        <dbReference type="ChEBI" id="CHEBI:15378"/>
        <dbReference type="ChEBI" id="CHEBI:16845"/>
        <dbReference type="ChEBI" id="CHEBI:57783"/>
        <dbReference type="ChEBI" id="CHEBI:58349"/>
        <dbReference type="ChEBI" id="CHEBI:67139"/>
        <dbReference type="EC" id="1.17.1.8"/>
    </reaction>
</comment>
<comment type="pathway">
    <text evidence="1">Amino-acid biosynthesis; L-lysine biosynthesis via DAP pathway; (S)-tetrahydrodipicolinate from L-aspartate: step 4/4.</text>
</comment>
<comment type="subunit">
    <text evidence="1">Homotetramer.</text>
</comment>
<comment type="subcellular location">
    <subcellularLocation>
        <location evidence="1">Cytoplasm</location>
    </subcellularLocation>
</comment>
<comment type="similarity">
    <text evidence="1">Belongs to the DapB family.</text>
</comment>
<comment type="caution">
    <text evidence="2">Was originally thought to be a dihydrodipicolinate reductase (DHDPR), catalyzing the conversion of dihydrodipicolinate to tetrahydrodipicolinate. However, it was shown in E.coli that the substrate of the enzymatic reaction is not dihydrodipicolinate (DHDP) but in fact (2S,4S)-4-hydroxy-2,3,4,5-tetrahydrodipicolinic acid (HTPA), the product released by the DapA-catalyzed reaction.</text>
</comment>
<organism>
    <name type="scientific">Escherichia coli O6:H1 (strain CFT073 / ATCC 700928 / UPEC)</name>
    <dbReference type="NCBI Taxonomy" id="199310"/>
    <lineage>
        <taxon>Bacteria</taxon>
        <taxon>Pseudomonadati</taxon>
        <taxon>Pseudomonadota</taxon>
        <taxon>Gammaproteobacteria</taxon>
        <taxon>Enterobacterales</taxon>
        <taxon>Enterobacteriaceae</taxon>
        <taxon>Escherichia</taxon>
    </lineage>
</organism>
<accession>Q8FLB4</accession>
<evidence type="ECO:0000255" key="1">
    <source>
        <dbReference type="HAMAP-Rule" id="MF_00102"/>
    </source>
</evidence>
<evidence type="ECO:0000305" key="2"/>
<keyword id="KW-0028">Amino-acid biosynthesis</keyword>
<keyword id="KW-0963">Cytoplasm</keyword>
<keyword id="KW-0220">Diaminopimelate biosynthesis</keyword>
<keyword id="KW-0457">Lysine biosynthesis</keyword>
<keyword id="KW-0520">NAD</keyword>
<keyword id="KW-0521">NADP</keyword>
<keyword id="KW-0560">Oxidoreductase</keyword>
<keyword id="KW-1185">Reference proteome</keyword>
<sequence>MHDANIRVAIAGAGGRMGRQLIQAALALEGVQLGAALEREGSSLLGSDAGELAGAGKTGVTVQSSLDAIKDDFDVFIDFTRPEGTLNHLAFCRQHGKGMVIGTTGFDEAGKQAIRDAAADIAIVFAANFSVGVNVMLKLLEKAAKVMGDYTDIEIIEAHHRHKVDAPSGTALAMGEAIAHALDKDLKDCAVYSREGHTGERVPGTIGFATVRAGDIVGEHTAMFADIGERLEITHKASSRMTFANGAVRSALWLSGKESGLFDMRDVLDLNNL</sequence>
<proteinExistence type="inferred from homology"/>
<gene>
    <name evidence="1" type="primary">dapB</name>
    <name type="ordered locus">c0037</name>
</gene>
<name>DAPB_ECOL6</name>
<protein>
    <recommendedName>
        <fullName evidence="1">4-hydroxy-tetrahydrodipicolinate reductase</fullName>
        <shortName evidence="1">HTPA reductase</shortName>
        <ecNumber evidence="1">1.17.1.8</ecNumber>
    </recommendedName>
</protein>